<organism>
    <name type="scientific">Bos taurus</name>
    <name type="common">Bovine</name>
    <dbReference type="NCBI Taxonomy" id="9913"/>
    <lineage>
        <taxon>Eukaryota</taxon>
        <taxon>Metazoa</taxon>
        <taxon>Chordata</taxon>
        <taxon>Craniata</taxon>
        <taxon>Vertebrata</taxon>
        <taxon>Euteleostomi</taxon>
        <taxon>Mammalia</taxon>
        <taxon>Eutheria</taxon>
        <taxon>Laurasiatheria</taxon>
        <taxon>Artiodactyla</taxon>
        <taxon>Ruminantia</taxon>
        <taxon>Pecora</taxon>
        <taxon>Bovidae</taxon>
        <taxon>Bovinae</taxon>
        <taxon>Bos</taxon>
    </lineage>
</organism>
<protein>
    <recommendedName>
        <fullName>Beta-secretase 1</fullName>
        <ecNumber evidence="2">3.4.23.46</ecNumber>
    </recommendedName>
    <alternativeName>
        <fullName>Beta-site amyloid precursor protein cleaving enzyme 1</fullName>
        <shortName>Beta-site APP cleaving enzyme 1</shortName>
    </alternativeName>
    <alternativeName>
        <fullName>Memapsin-2</fullName>
    </alternativeName>
    <alternativeName>
        <fullName>Membrane-associated aspartic protease 2</fullName>
    </alternativeName>
</protein>
<name>BACE1_BOVIN</name>
<reference key="1">
    <citation type="submission" date="2006-02" db="EMBL/GenBank/DDBJ databases">
        <authorList>
            <consortium name="NIH - Mammalian Gene Collection (MGC) project"/>
        </authorList>
    </citation>
    <scope>NUCLEOTIDE SEQUENCE [LARGE SCALE MRNA]</scope>
    <source>
        <strain>Hereford</strain>
        <tissue>Uterus</tissue>
    </source>
</reference>
<proteinExistence type="evidence at transcript level"/>
<evidence type="ECO:0000250" key="1"/>
<evidence type="ECO:0000250" key="2">
    <source>
        <dbReference type="UniProtKB" id="P56817"/>
    </source>
</evidence>
<evidence type="ECO:0000250" key="3">
    <source>
        <dbReference type="UniProtKB" id="P56818"/>
    </source>
</evidence>
<evidence type="ECO:0000255" key="4"/>
<evidence type="ECO:0000255" key="5">
    <source>
        <dbReference type="PROSITE-ProRule" id="PRU01103"/>
    </source>
</evidence>
<evidence type="ECO:0000255" key="6">
    <source>
        <dbReference type="PROSITE-ProRule" id="PRU10094"/>
    </source>
</evidence>
<evidence type="ECO:0000256" key="7">
    <source>
        <dbReference type="SAM" id="MobiDB-lite"/>
    </source>
</evidence>
<evidence type="ECO:0000305" key="8"/>
<sequence length="501" mass="55725">MAQALPWLLLWMGSGVLPAHGSQPGIRLPLRSGLGGAPLGLRLPRETDEESEEPGRRGSFVEMVDNLRGKSGQGYYVEMTLGSPPQTLNILVDTGSSNFAVGAAPHPFLHRYYQRQLSSTYRDLRKGVYVPYTQGKWEGELGTDLVSIPHGPNVTVRANIAAITESDKFFINGSNWEGILGLAYAEIARPDDSLEPFFDSLVKQTHVPNLFSLQLCGAGFPLNQSEALASVGGSMIIGGIDHSLYMGSLWYTPIRREWYYEVIIVRVEINGQDLKMDCKEYNYDKSIVDSGTTNLRLPKKVFEAAVKSIKAASSTEKFPDGFWLGEQLVCWQAGTTPWNIFPVISLYLMGEVTNQSFRITILPQQYLRPVEDVATSQDDCYKFAISQSSTGTVMGAVIMEGFYVVFDRARKRIGFAVSACHVHDEFRTAAVEGPFVTPDMEDCGYNIPQTDESTLMTIAYVMAAICALFMLPLCLMVCQWRCLRCLRHQHDDFADDISLLK</sequence>
<dbReference type="EC" id="3.4.23.46" evidence="2"/>
<dbReference type="EMBL" id="BC113325">
    <property type="protein sequence ID" value="AAI13326.1"/>
    <property type="molecule type" value="mRNA"/>
</dbReference>
<dbReference type="RefSeq" id="NP_001039996.1">
    <property type="nucleotide sequence ID" value="NM_001046531.1"/>
</dbReference>
<dbReference type="BMRB" id="Q2HJ40"/>
<dbReference type="SMR" id="Q2HJ40"/>
<dbReference type="FunCoup" id="Q2HJ40">
    <property type="interactions" value="1104"/>
</dbReference>
<dbReference type="STRING" id="9913.ENSBTAP00000039837"/>
<dbReference type="MEROPS" id="A01.004"/>
<dbReference type="GlyCosmos" id="Q2HJ40">
    <property type="glycosylation" value="4 sites, No reported glycans"/>
</dbReference>
<dbReference type="GlyGen" id="Q2HJ40">
    <property type="glycosylation" value="4 sites"/>
</dbReference>
<dbReference type="PaxDb" id="9913-ENSBTAP00000039837"/>
<dbReference type="GeneID" id="614333"/>
<dbReference type="KEGG" id="bta:614333"/>
<dbReference type="CTD" id="23621"/>
<dbReference type="VEuPathDB" id="HostDB:ENSBTAG00000019365"/>
<dbReference type="eggNOG" id="KOG1339">
    <property type="taxonomic scope" value="Eukaryota"/>
</dbReference>
<dbReference type="HOGENOM" id="CLU_039009_0_0_1"/>
<dbReference type="InParanoid" id="Q2HJ40"/>
<dbReference type="OMA" id="VLMEAFY"/>
<dbReference type="OrthoDB" id="2747330at2759"/>
<dbReference type="TreeFam" id="TF329595"/>
<dbReference type="Proteomes" id="UP000009136">
    <property type="component" value="Chromosome 15"/>
</dbReference>
<dbReference type="Bgee" id="ENSBTAG00000019365">
    <property type="expression patterns" value="Expressed in floor plate of diencephalon and 105 other cell types or tissues"/>
</dbReference>
<dbReference type="GO" id="GO:0030424">
    <property type="term" value="C:axon"/>
    <property type="evidence" value="ECO:0007669"/>
    <property type="project" value="UniProtKB-SubCell"/>
</dbReference>
<dbReference type="GO" id="GO:0009986">
    <property type="term" value="C:cell surface"/>
    <property type="evidence" value="ECO:0000250"/>
    <property type="project" value="UniProtKB"/>
</dbReference>
<dbReference type="GO" id="GO:0030659">
    <property type="term" value="C:cytoplasmic vesicle membrane"/>
    <property type="evidence" value="ECO:0007669"/>
    <property type="project" value="UniProtKB-SubCell"/>
</dbReference>
<dbReference type="GO" id="GO:0030425">
    <property type="term" value="C:dendrite"/>
    <property type="evidence" value="ECO:0007669"/>
    <property type="project" value="UniProtKB-SubCell"/>
</dbReference>
<dbReference type="GO" id="GO:0005769">
    <property type="term" value="C:early endosome"/>
    <property type="evidence" value="ECO:0000250"/>
    <property type="project" value="UniProtKB"/>
</dbReference>
<dbReference type="GO" id="GO:0005783">
    <property type="term" value="C:endoplasmic reticulum"/>
    <property type="evidence" value="ECO:0007669"/>
    <property type="project" value="UniProtKB-SubCell"/>
</dbReference>
<dbReference type="GO" id="GO:0005768">
    <property type="term" value="C:endosome"/>
    <property type="evidence" value="ECO:0000250"/>
    <property type="project" value="UniProtKB"/>
</dbReference>
<dbReference type="GO" id="GO:0005794">
    <property type="term" value="C:Golgi apparatus"/>
    <property type="evidence" value="ECO:0000250"/>
    <property type="project" value="UniProtKB"/>
</dbReference>
<dbReference type="GO" id="GO:0005770">
    <property type="term" value="C:late endosome"/>
    <property type="evidence" value="ECO:0000250"/>
    <property type="project" value="UniProtKB"/>
</dbReference>
<dbReference type="GO" id="GO:0005764">
    <property type="term" value="C:lysosome"/>
    <property type="evidence" value="ECO:0000250"/>
    <property type="project" value="UniProtKB"/>
</dbReference>
<dbReference type="GO" id="GO:0045121">
    <property type="term" value="C:membrane raft"/>
    <property type="evidence" value="ECO:0007669"/>
    <property type="project" value="UniProtKB-SubCell"/>
</dbReference>
<dbReference type="GO" id="GO:0005886">
    <property type="term" value="C:plasma membrane"/>
    <property type="evidence" value="ECO:0000318"/>
    <property type="project" value="GO_Central"/>
</dbReference>
<dbReference type="GO" id="GO:0055037">
    <property type="term" value="C:recycling endosome"/>
    <property type="evidence" value="ECO:0000250"/>
    <property type="project" value="UniProtKB"/>
</dbReference>
<dbReference type="GO" id="GO:0005802">
    <property type="term" value="C:trans-Golgi network"/>
    <property type="evidence" value="ECO:0000250"/>
    <property type="project" value="UniProtKB"/>
</dbReference>
<dbReference type="GO" id="GO:0004190">
    <property type="term" value="F:aspartic-type endopeptidase activity"/>
    <property type="evidence" value="ECO:0000250"/>
    <property type="project" value="UniProtKB"/>
</dbReference>
<dbReference type="GO" id="GO:0004175">
    <property type="term" value="F:endopeptidase activity"/>
    <property type="evidence" value="ECO:0000250"/>
    <property type="project" value="UniProtKB"/>
</dbReference>
<dbReference type="GO" id="GO:0050435">
    <property type="term" value="P:amyloid-beta metabolic process"/>
    <property type="evidence" value="ECO:0000250"/>
    <property type="project" value="UniProtKB"/>
</dbReference>
<dbReference type="GO" id="GO:0006509">
    <property type="term" value="P:membrane protein ectodomain proteolysis"/>
    <property type="evidence" value="ECO:0000318"/>
    <property type="project" value="GO_Central"/>
</dbReference>
<dbReference type="GO" id="GO:0006508">
    <property type="term" value="P:proteolysis"/>
    <property type="evidence" value="ECO:0000250"/>
    <property type="project" value="UniProtKB"/>
</dbReference>
<dbReference type="CDD" id="cd05473">
    <property type="entry name" value="beta_secretase_like"/>
    <property type="match status" value="1"/>
</dbReference>
<dbReference type="FunFam" id="2.40.70.10:FF:000003">
    <property type="entry name" value="Beta-secretase 1"/>
    <property type="match status" value="1"/>
</dbReference>
<dbReference type="FunFam" id="2.40.70.10:FF:000007">
    <property type="entry name" value="Beta-secretase 1"/>
    <property type="match status" value="1"/>
</dbReference>
<dbReference type="Gene3D" id="2.40.70.10">
    <property type="entry name" value="Acid Proteases"/>
    <property type="match status" value="2"/>
</dbReference>
<dbReference type="InterPro" id="IPR001461">
    <property type="entry name" value="Aspartic_peptidase_A1"/>
</dbReference>
<dbReference type="InterPro" id="IPR001969">
    <property type="entry name" value="Aspartic_peptidase_AS"/>
</dbReference>
<dbReference type="InterPro" id="IPR009119">
    <property type="entry name" value="BACE"/>
</dbReference>
<dbReference type="InterPro" id="IPR009120">
    <property type="entry name" value="BACE1"/>
</dbReference>
<dbReference type="InterPro" id="IPR033874">
    <property type="entry name" value="Memapsin-like"/>
</dbReference>
<dbReference type="InterPro" id="IPR033121">
    <property type="entry name" value="PEPTIDASE_A1"/>
</dbReference>
<dbReference type="InterPro" id="IPR021109">
    <property type="entry name" value="Peptidase_aspartic_dom_sf"/>
</dbReference>
<dbReference type="PANTHER" id="PTHR47965">
    <property type="entry name" value="ASPARTYL PROTEASE-RELATED"/>
    <property type="match status" value="1"/>
</dbReference>
<dbReference type="PANTHER" id="PTHR47965:SF69">
    <property type="entry name" value="BETA-SECRETASE 1"/>
    <property type="match status" value="1"/>
</dbReference>
<dbReference type="Pfam" id="PF00026">
    <property type="entry name" value="Asp"/>
    <property type="match status" value="1"/>
</dbReference>
<dbReference type="PRINTS" id="PR01816">
    <property type="entry name" value="BACE1"/>
</dbReference>
<dbReference type="PRINTS" id="PR01815">
    <property type="entry name" value="BACEFAMILY"/>
</dbReference>
<dbReference type="PRINTS" id="PR00792">
    <property type="entry name" value="PEPSIN"/>
</dbReference>
<dbReference type="SUPFAM" id="SSF50630">
    <property type="entry name" value="Acid proteases"/>
    <property type="match status" value="1"/>
</dbReference>
<dbReference type="PROSITE" id="PS00141">
    <property type="entry name" value="ASP_PROTEASE"/>
    <property type="match status" value="1"/>
</dbReference>
<dbReference type="PROSITE" id="PS51767">
    <property type="entry name" value="PEPTIDASE_A1"/>
    <property type="match status" value="1"/>
</dbReference>
<keyword id="KW-0007">Acetylation</keyword>
<keyword id="KW-0064">Aspartyl protease</keyword>
<keyword id="KW-1003">Cell membrane</keyword>
<keyword id="KW-0966">Cell projection</keyword>
<keyword id="KW-0968">Cytoplasmic vesicle</keyword>
<keyword id="KW-1015">Disulfide bond</keyword>
<keyword id="KW-0256">Endoplasmic reticulum</keyword>
<keyword id="KW-0967">Endosome</keyword>
<keyword id="KW-0325">Glycoprotein</keyword>
<keyword id="KW-0333">Golgi apparatus</keyword>
<keyword id="KW-0378">Hydrolase</keyword>
<keyword id="KW-1017">Isopeptide bond</keyword>
<keyword id="KW-0449">Lipoprotein</keyword>
<keyword id="KW-0458">Lysosome</keyword>
<keyword id="KW-0472">Membrane</keyword>
<keyword id="KW-0564">Palmitate</keyword>
<keyword id="KW-0597">Phosphoprotein</keyword>
<keyword id="KW-0645">Protease</keyword>
<keyword id="KW-1185">Reference proteome</keyword>
<keyword id="KW-0732">Signal</keyword>
<keyword id="KW-0812">Transmembrane</keyword>
<keyword id="KW-1133">Transmembrane helix</keyword>
<keyword id="KW-0832">Ubl conjugation</keyword>
<keyword id="KW-0865">Zymogen</keyword>
<gene>
    <name type="primary">BACE1</name>
</gene>
<comment type="function">
    <text evidence="2 3">Responsible for the proteolytic processing of the amyloid precursor protein (APP). Cleaves at the N-terminus of the A-beta peptide sequence, between residues 671 and 672 of APP, leads to the generation and extracellular release of beta-cleaved soluble APP, and a corresponding cell-associated C-terminal fragment which is later released by gamma-secretase (By similarity). Cleaves CHL1 (By similarity).</text>
</comment>
<comment type="catalytic activity">
    <reaction evidence="2">
        <text>Broad endopeptidase specificity. Cleaves Glu-Val-Asn-Leu-|-Asp-Ala-Glu-Phe in the Swedish variant of Alzheimer's amyloid precursor protein.</text>
        <dbReference type="EC" id="3.4.23.46"/>
    </reaction>
</comment>
<comment type="activity regulation">
    <text evidence="2">Inhibited by RTN3 and RTN4.</text>
</comment>
<comment type="subunit">
    <text evidence="2 3">Monomer. Interacts (via DXXLL motif) with GGA1, GGA2 and GGA3 (via their VHS domain); the interaction highly increases when BACE1 is phosphorylated at Ser-498. Interacts with RTN1; RTN2; RTN3 and RTN4; the interaction leads to inhibition of amyloid precursor protein processing (By similarity). Interacts with SNX6. Interacts with PCSK9. Interacts with NAT8 and NAT8B. Interacts with BIN1 (By similarity). Interacts (via extracellular domain) with ADAM10 (via extracellular domain) (By similarity). Interacts with SORL1; this interaction may affect binding with APP and hence reduce APP cleavage (By similarity). Interacts with NRDC AND NRG1 (By similarity).</text>
</comment>
<comment type="subcellular location">
    <subcellularLocation>
        <location evidence="2">Cell membrane</location>
        <topology evidence="2">Single-pass type I membrane protein</topology>
    </subcellularLocation>
    <subcellularLocation>
        <location evidence="2">Golgi apparatus</location>
        <location evidence="2">trans-Golgi network</location>
    </subcellularLocation>
    <subcellularLocation>
        <location evidence="2">Endoplasmic reticulum</location>
    </subcellularLocation>
    <subcellularLocation>
        <location evidence="2">Endosome</location>
    </subcellularLocation>
    <subcellularLocation>
        <location evidence="2">Cell surface</location>
    </subcellularLocation>
    <subcellularLocation>
        <location evidence="2">Cytoplasmic vesicle membrane</location>
        <topology evidence="2">Single-pass type I membrane protein</topology>
    </subcellularLocation>
    <subcellularLocation>
        <location evidence="3">Membrane raft</location>
    </subcellularLocation>
    <subcellularLocation>
        <location evidence="2">Lysosome</location>
    </subcellularLocation>
    <subcellularLocation>
        <location evidence="2">Late endosome</location>
    </subcellularLocation>
    <subcellularLocation>
        <location evidence="2">Early endosome</location>
    </subcellularLocation>
    <subcellularLocation>
        <location evidence="2">Recycling endosome</location>
    </subcellularLocation>
    <subcellularLocation>
        <location evidence="3">Cell projection</location>
        <location evidence="3">Axon</location>
    </subcellularLocation>
    <subcellularLocation>
        <location evidence="3">Cell projection</location>
        <location evidence="3">Dendrite</location>
    </subcellularLocation>
    <text evidence="2 3">Predominantly localized to the later Golgi/trans-Golgi network (TGN) and minimally detectable in the early Golgi compartments. A small portion is also found in the endoplasmic reticulum, endosomes and on the cell surface (By similarity). Colocalization with APP in early endosomes is due to addition of bisecting N-acetylglucosamine which blocks targeting to late endosomes and lysosomes (By similarity). Retrogradly transported from endosomal compartments to the trans-Golgi network in a phosphorylation- and GGA1- dependent manner (By similarity).</text>
</comment>
<comment type="domain">
    <text evidence="2">DXXLL motif is required for a proper endocytosis and retrograde transport to the trans-Golgi network, as well as for regulation of lysosomal degradation.</text>
</comment>
<comment type="domain">
    <text evidence="2">The transmembrane domain is necessary for its activity. It determines its late Golgi localization and access to its substrate, APP.</text>
</comment>
<comment type="PTM">
    <text evidence="3">Palmitoylation mediates lipid raft localization.</text>
</comment>
<comment type="PTM">
    <text evidence="2">Acetylated in the endoplasmic reticulum at Lys-126, Lys-275, Lys-279, Lys-285, Lys-299, Lys-300 and Lys-307. Acetylation by NAT8 and NAT8B is transient and deacetylation probably occurs in the Golgi. Acetylation regulates the maturation, the transport to the plasma membrane, the stability and the expression of the protein.</text>
</comment>
<comment type="PTM">
    <text evidence="2">Ubiquitinated at Lys-501, ubiquitination leads to lysosomal degradation. Monoubiquitinated and 'Lys-63'-linked polyubitinated. Deubiquitnated by USP8; inhibits lysosomal degradation.</text>
</comment>
<comment type="PTM">
    <text evidence="2">Phosphorylation at Ser-498 is required for interaction with GGA1 and retrograded transport from endosomal compartments to the trans-Golgi network. Non-phosphorylated BACE1 enters a direct recycling route to the cell surface.</text>
</comment>
<comment type="PTM">
    <text evidence="2 3">N-Glycosylated (By similarity). Addition of a bisecting N-acetylglucosamine by MGAT3 blocks lysosomal targeting, further degradation and is required for maintaining stability under stress conditions (By similarity).</text>
</comment>
<comment type="similarity">
    <text evidence="8">Belongs to the peptidase A1 family.</text>
</comment>
<accession>Q2HJ40</accession>
<feature type="signal peptide" evidence="4">
    <location>
        <begin position="1"/>
        <end position="21"/>
    </location>
</feature>
<feature type="propeptide" id="PRO_0000245802" evidence="1">
    <location>
        <begin position="22"/>
        <end position="45"/>
    </location>
</feature>
<feature type="chain" id="PRO_0000245803" description="Beta-secretase 1">
    <location>
        <begin position="46"/>
        <end position="501"/>
    </location>
</feature>
<feature type="topological domain" description="Extracellular" evidence="4">
    <location>
        <begin position="22"/>
        <end position="457"/>
    </location>
</feature>
<feature type="transmembrane region" description="Helical" evidence="4">
    <location>
        <begin position="458"/>
        <end position="478"/>
    </location>
</feature>
<feature type="topological domain" description="Cytoplasmic" evidence="4">
    <location>
        <begin position="479"/>
        <end position="501"/>
    </location>
</feature>
<feature type="domain" description="Peptidase A1" evidence="5">
    <location>
        <begin position="75"/>
        <end position="416"/>
    </location>
</feature>
<feature type="region of interest" description="Disordered" evidence="7">
    <location>
        <begin position="39"/>
        <end position="58"/>
    </location>
</feature>
<feature type="region of interest" description="Interaction with RTN3" evidence="1">
    <location>
        <begin position="479"/>
        <end position="501"/>
    </location>
</feature>
<feature type="short sequence motif" description="DXXLL" evidence="2">
    <location>
        <begin position="496"/>
        <end position="500"/>
    </location>
</feature>
<feature type="active site" evidence="6">
    <location>
        <position position="93"/>
    </location>
</feature>
<feature type="active site" evidence="6">
    <location>
        <position position="289"/>
    </location>
</feature>
<feature type="modified residue" description="N6-acetyllysine" evidence="2">
    <location>
        <position position="126"/>
    </location>
</feature>
<feature type="modified residue" description="N6-acetyllysine" evidence="2">
    <location>
        <position position="275"/>
    </location>
</feature>
<feature type="modified residue" description="N6-acetyllysine" evidence="2">
    <location>
        <position position="279"/>
    </location>
</feature>
<feature type="modified residue" description="N6-acetyllysine" evidence="2">
    <location>
        <position position="285"/>
    </location>
</feature>
<feature type="modified residue" description="N6-acetyllysine" evidence="2">
    <location>
        <position position="299"/>
    </location>
</feature>
<feature type="modified residue" description="N6-acetyllysine" evidence="2">
    <location>
        <position position="300"/>
    </location>
</feature>
<feature type="modified residue" description="N6-acetyllysine" evidence="2">
    <location>
        <position position="307"/>
    </location>
</feature>
<feature type="modified residue" description="Phosphoserine" evidence="3">
    <location>
        <position position="498"/>
    </location>
</feature>
<feature type="lipid moiety-binding region" description="S-palmitoyl cysteine" evidence="3">
    <location>
        <position position="474"/>
    </location>
</feature>
<feature type="lipid moiety-binding region" description="S-palmitoyl cysteine" evidence="3">
    <location>
        <position position="478"/>
    </location>
</feature>
<feature type="lipid moiety-binding region" description="S-palmitoyl cysteine" evidence="3">
    <location>
        <position position="482"/>
    </location>
</feature>
<feature type="lipid moiety-binding region" description="S-palmitoyl cysteine" evidence="3">
    <location>
        <position position="485"/>
    </location>
</feature>
<feature type="glycosylation site" description="N-linked (GlcNAc...) asparagine" evidence="4">
    <location>
        <position position="153"/>
    </location>
</feature>
<feature type="glycosylation site" description="N-linked (GlcNAc...) asparagine" evidence="4">
    <location>
        <position position="172"/>
    </location>
</feature>
<feature type="glycosylation site" description="N-linked (GlcNAc...) asparagine" evidence="4">
    <location>
        <position position="223"/>
    </location>
</feature>
<feature type="glycosylation site" description="N-linked (GlcNAc...) asparagine" evidence="4">
    <location>
        <position position="354"/>
    </location>
</feature>
<feature type="disulfide bond" evidence="1">
    <location>
        <begin position="216"/>
        <end position="420"/>
    </location>
</feature>
<feature type="disulfide bond" evidence="1">
    <location>
        <begin position="278"/>
        <end position="443"/>
    </location>
</feature>
<feature type="disulfide bond" evidence="1">
    <location>
        <begin position="330"/>
        <end position="380"/>
    </location>
</feature>
<feature type="cross-link" description="Glycyl lysine isopeptide (Lys-Gly) (interchain with G-Cter in ubiquitin)" evidence="2">
    <location>
        <position position="501"/>
    </location>
</feature>